<feature type="chain" id="PRO_1000001560" description="Recombination protein RecR">
    <location>
        <begin position="1"/>
        <end position="198"/>
    </location>
</feature>
<feature type="domain" description="Toprim" evidence="1">
    <location>
        <begin position="80"/>
        <end position="175"/>
    </location>
</feature>
<feature type="zinc finger region" description="C4-type" evidence="1">
    <location>
        <begin position="57"/>
        <end position="72"/>
    </location>
</feature>
<organism>
    <name type="scientific">Lactococcus lactis subsp. cremoris (strain SK11)</name>
    <dbReference type="NCBI Taxonomy" id="272622"/>
    <lineage>
        <taxon>Bacteria</taxon>
        <taxon>Bacillati</taxon>
        <taxon>Bacillota</taxon>
        <taxon>Bacilli</taxon>
        <taxon>Lactobacillales</taxon>
        <taxon>Streptococcaceae</taxon>
        <taxon>Lactococcus</taxon>
        <taxon>Lactococcus cremoris subsp. cremoris</taxon>
    </lineage>
</organism>
<keyword id="KW-0227">DNA damage</keyword>
<keyword id="KW-0233">DNA recombination</keyword>
<keyword id="KW-0234">DNA repair</keyword>
<keyword id="KW-0479">Metal-binding</keyword>
<keyword id="KW-0862">Zinc</keyword>
<keyword id="KW-0863">Zinc-finger</keyword>
<accession>Q031X9</accession>
<comment type="function">
    <text evidence="1">May play a role in DNA repair. It seems to be involved in an RecBC-independent recombinational process of DNA repair. It may act with RecF and RecO.</text>
</comment>
<comment type="similarity">
    <text evidence="1">Belongs to the RecR family.</text>
</comment>
<evidence type="ECO:0000255" key="1">
    <source>
        <dbReference type="HAMAP-Rule" id="MF_00017"/>
    </source>
</evidence>
<name>RECR_LACLS</name>
<dbReference type="EMBL" id="CP000425">
    <property type="protein sequence ID" value="ABJ71993.1"/>
    <property type="molecule type" value="Genomic_DNA"/>
</dbReference>
<dbReference type="RefSeq" id="WP_011675399.1">
    <property type="nucleotide sequence ID" value="NC_008527.1"/>
</dbReference>
<dbReference type="SMR" id="Q031X9"/>
<dbReference type="KEGG" id="llc:LACR_0386"/>
<dbReference type="HOGENOM" id="CLU_060739_1_0_9"/>
<dbReference type="Proteomes" id="UP000000240">
    <property type="component" value="Chromosome"/>
</dbReference>
<dbReference type="GO" id="GO:0003677">
    <property type="term" value="F:DNA binding"/>
    <property type="evidence" value="ECO:0007669"/>
    <property type="project" value="UniProtKB-UniRule"/>
</dbReference>
<dbReference type="GO" id="GO:0008270">
    <property type="term" value="F:zinc ion binding"/>
    <property type="evidence" value="ECO:0007669"/>
    <property type="project" value="UniProtKB-KW"/>
</dbReference>
<dbReference type="GO" id="GO:0006310">
    <property type="term" value="P:DNA recombination"/>
    <property type="evidence" value="ECO:0007669"/>
    <property type="project" value="UniProtKB-UniRule"/>
</dbReference>
<dbReference type="GO" id="GO:0006281">
    <property type="term" value="P:DNA repair"/>
    <property type="evidence" value="ECO:0007669"/>
    <property type="project" value="UniProtKB-UniRule"/>
</dbReference>
<dbReference type="CDD" id="cd01025">
    <property type="entry name" value="TOPRIM_recR"/>
    <property type="match status" value="1"/>
</dbReference>
<dbReference type="Gene3D" id="3.30.60.80">
    <property type="match status" value="1"/>
</dbReference>
<dbReference type="Gene3D" id="3.40.1360.10">
    <property type="match status" value="1"/>
</dbReference>
<dbReference type="Gene3D" id="6.10.250.240">
    <property type="match status" value="1"/>
</dbReference>
<dbReference type="Gene3D" id="1.10.8.420">
    <property type="entry name" value="RecR Domain 1"/>
    <property type="match status" value="1"/>
</dbReference>
<dbReference type="HAMAP" id="MF_00017">
    <property type="entry name" value="RecR"/>
    <property type="match status" value="1"/>
</dbReference>
<dbReference type="InterPro" id="IPR000093">
    <property type="entry name" value="DNA_Rcmb_RecR"/>
</dbReference>
<dbReference type="InterPro" id="IPR023627">
    <property type="entry name" value="Rcmb_RecR"/>
</dbReference>
<dbReference type="InterPro" id="IPR015967">
    <property type="entry name" value="Rcmb_RecR_Znf"/>
</dbReference>
<dbReference type="InterPro" id="IPR006171">
    <property type="entry name" value="TOPRIM_dom"/>
</dbReference>
<dbReference type="InterPro" id="IPR034137">
    <property type="entry name" value="TOPRIM_RecR"/>
</dbReference>
<dbReference type="NCBIfam" id="TIGR00615">
    <property type="entry name" value="recR"/>
    <property type="match status" value="1"/>
</dbReference>
<dbReference type="PANTHER" id="PTHR30446">
    <property type="entry name" value="RECOMBINATION PROTEIN RECR"/>
    <property type="match status" value="1"/>
</dbReference>
<dbReference type="PANTHER" id="PTHR30446:SF0">
    <property type="entry name" value="RECOMBINATION PROTEIN RECR"/>
    <property type="match status" value="1"/>
</dbReference>
<dbReference type="Pfam" id="PF21175">
    <property type="entry name" value="RecR_C"/>
    <property type="match status" value="1"/>
</dbReference>
<dbReference type="Pfam" id="PF21176">
    <property type="entry name" value="RecR_HhH"/>
    <property type="match status" value="1"/>
</dbReference>
<dbReference type="Pfam" id="PF02132">
    <property type="entry name" value="RecR_ZnF"/>
    <property type="match status" value="1"/>
</dbReference>
<dbReference type="Pfam" id="PF13662">
    <property type="entry name" value="Toprim_4"/>
    <property type="match status" value="1"/>
</dbReference>
<dbReference type="SMART" id="SM00493">
    <property type="entry name" value="TOPRIM"/>
    <property type="match status" value="1"/>
</dbReference>
<dbReference type="SUPFAM" id="SSF111304">
    <property type="entry name" value="Recombination protein RecR"/>
    <property type="match status" value="1"/>
</dbReference>
<dbReference type="PROSITE" id="PS01300">
    <property type="entry name" value="RECR"/>
    <property type="match status" value="1"/>
</dbReference>
<dbReference type="PROSITE" id="PS50880">
    <property type="entry name" value="TOPRIM"/>
    <property type="match status" value="1"/>
</dbReference>
<reference key="1">
    <citation type="journal article" date="2006" name="Proc. Natl. Acad. Sci. U.S.A.">
        <title>Comparative genomics of the lactic acid bacteria.</title>
        <authorList>
            <person name="Makarova K.S."/>
            <person name="Slesarev A."/>
            <person name="Wolf Y.I."/>
            <person name="Sorokin A."/>
            <person name="Mirkin B."/>
            <person name="Koonin E.V."/>
            <person name="Pavlov A."/>
            <person name="Pavlova N."/>
            <person name="Karamychev V."/>
            <person name="Polouchine N."/>
            <person name="Shakhova V."/>
            <person name="Grigoriev I."/>
            <person name="Lou Y."/>
            <person name="Rohksar D."/>
            <person name="Lucas S."/>
            <person name="Huang K."/>
            <person name="Goodstein D.M."/>
            <person name="Hawkins T."/>
            <person name="Plengvidhya V."/>
            <person name="Welker D."/>
            <person name="Hughes J."/>
            <person name="Goh Y."/>
            <person name="Benson A."/>
            <person name="Baldwin K."/>
            <person name="Lee J.-H."/>
            <person name="Diaz-Muniz I."/>
            <person name="Dosti B."/>
            <person name="Smeianov V."/>
            <person name="Wechter W."/>
            <person name="Barabote R."/>
            <person name="Lorca G."/>
            <person name="Altermann E."/>
            <person name="Barrangou R."/>
            <person name="Ganesan B."/>
            <person name="Xie Y."/>
            <person name="Rawsthorne H."/>
            <person name="Tamir D."/>
            <person name="Parker C."/>
            <person name="Breidt F."/>
            <person name="Broadbent J.R."/>
            <person name="Hutkins R."/>
            <person name="O'Sullivan D."/>
            <person name="Steele J."/>
            <person name="Unlu G."/>
            <person name="Saier M.H. Jr."/>
            <person name="Klaenhammer T."/>
            <person name="Richardson P."/>
            <person name="Kozyavkin S."/>
            <person name="Weimer B.C."/>
            <person name="Mills D.A."/>
        </authorList>
    </citation>
    <scope>NUCLEOTIDE SEQUENCE [LARGE SCALE GENOMIC DNA]</scope>
    <source>
        <strain>SK11</strain>
    </source>
</reference>
<protein>
    <recommendedName>
        <fullName evidence="1">Recombination protein RecR</fullName>
    </recommendedName>
</protein>
<sequence>MYYPEPIARLIESFSKLPGIGQKTATRLAFYTIGMEDQDVNEFAKNLLSAKRDLRFCSICGNLTESDPCAICTDPTRDRTTILVVEESKDVLAMEKIREYRGLYHVLHGTISPMNGISPDEINVKSLITRLMDSEVKEVIIATNATSDGEATAMYLARMIKPAGIKVTRLAHGLAVGSDIEYADEVTLSKAVENRLEI</sequence>
<gene>
    <name evidence="1" type="primary">recR</name>
    <name type="ordered locus">LACR_0386</name>
</gene>
<proteinExistence type="inferred from homology"/>